<sequence>MLDLKMIRNHVEDVKAKLATRGVKPEAIDDLLAKDNERRELIVKSENLKKLRNEVSDQISQLKRNKEDANDKIQEMRKVSQDIKGLDEQLENIAEEVESKAAHLPNLPHEDVPVSLTEEGSVEQRRNGTPRTFDFTPKAHWEIGEELGILDFERAAKVAGSRFVYYVGDGARLERAVYNFFLDQNNAAGFTEEITPYMVNDASMFGTGQFPKFKETHAGYEVKDEGLTLIPTAEVPLVNYYRDEIIDEEKLPISVTALSPAFRSEAGSAGRDTRGLIRMHQFNKVEMVKIAKPEQSWNELEKLTTHAETLLQKLGLPYRVITLTTGDMSFTAAKTYDLEVWIPAQDKYREISSCSNCTDFQARRAHIRFRDENGKLQYVHTLNGSGLAVGRTVAAILENYQNEDGTVNVPEALVPYMQGTTVIGKK</sequence>
<organism>
    <name type="scientific">Pediococcus pentosaceus (strain ATCC 25745 / CCUG 21536 / LMG 10740 / 183-1w)</name>
    <dbReference type="NCBI Taxonomy" id="278197"/>
    <lineage>
        <taxon>Bacteria</taxon>
        <taxon>Bacillati</taxon>
        <taxon>Bacillota</taxon>
        <taxon>Bacilli</taxon>
        <taxon>Lactobacillales</taxon>
        <taxon>Lactobacillaceae</taxon>
        <taxon>Pediococcus</taxon>
    </lineage>
</organism>
<proteinExistence type="inferred from homology"/>
<gene>
    <name evidence="1" type="primary">serS</name>
    <name type="ordered locus">PEPE_1436</name>
</gene>
<comment type="function">
    <text evidence="1">Catalyzes the attachment of serine to tRNA(Ser). Is also able to aminoacylate tRNA(Sec) with serine, to form the misacylated tRNA L-seryl-tRNA(Sec), which will be further converted into selenocysteinyl-tRNA(Sec).</text>
</comment>
<comment type="catalytic activity">
    <reaction evidence="1">
        <text>tRNA(Ser) + L-serine + ATP = L-seryl-tRNA(Ser) + AMP + diphosphate + H(+)</text>
        <dbReference type="Rhea" id="RHEA:12292"/>
        <dbReference type="Rhea" id="RHEA-COMP:9669"/>
        <dbReference type="Rhea" id="RHEA-COMP:9703"/>
        <dbReference type="ChEBI" id="CHEBI:15378"/>
        <dbReference type="ChEBI" id="CHEBI:30616"/>
        <dbReference type="ChEBI" id="CHEBI:33019"/>
        <dbReference type="ChEBI" id="CHEBI:33384"/>
        <dbReference type="ChEBI" id="CHEBI:78442"/>
        <dbReference type="ChEBI" id="CHEBI:78533"/>
        <dbReference type="ChEBI" id="CHEBI:456215"/>
        <dbReference type="EC" id="6.1.1.11"/>
    </reaction>
</comment>
<comment type="catalytic activity">
    <reaction evidence="1">
        <text>tRNA(Sec) + L-serine + ATP = L-seryl-tRNA(Sec) + AMP + diphosphate + H(+)</text>
        <dbReference type="Rhea" id="RHEA:42580"/>
        <dbReference type="Rhea" id="RHEA-COMP:9742"/>
        <dbReference type="Rhea" id="RHEA-COMP:10128"/>
        <dbReference type="ChEBI" id="CHEBI:15378"/>
        <dbReference type="ChEBI" id="CHEBI:30616"/>
        <dbReference type="ChEBI" id="CHEBI:33019"/>
        <dbReference type="ChEBI" id="CHEBI:33384"/>
        <dbReference type="ChEBI" id="CHEBI:78442"/>
        <dbReference type="ChEBI" id="CHEBI:78533"/>
        <dbReference type="ChEBI" id="CHEBI:456215"/>
        <dbReference type="EC" id="6.1.1.11"/>
    </reaction>
</comment>
<comment type="pathway">
    <text evidence="1">Aminoacyl-tRNA biosynthesis; selenocysteinyl-tRNA(Sec) biosynthesis; L-seryl-tRNA(Sec) from L-serine and tRNA(Sec): step 1/1.</text>
</comment>
<comment type="subunit">
    <text evidence="1">Homodimer. The tRNA molecule binds across the dimer.</text>
</comment>
<comment type="subcellular location">
    <subcellularLocation>
        <location evidence="1">Cytoplasm</location>
    </subcellularLocation>
</comment>
<comment type="domain">
    <text evidence="1">Consists of two distinct domains, a catalytic core and a N-terminal extension that is involved in tRNA binding.</text>
</comment>
<comment type="similarity">
    <text evidence="1">Belongs to the class-II aminoacyl-tRNA synthetase family. Type-1 seryl-tRNA synthetase subfamily.</text>
</comment>
<keyword id="KW-0030">Aminoacyl-tRNA synthetase</keyword>
<keyword id="KW-0067">ATP-binding</keyword>
<keyword id="KW-0963">Cytoplasm</keyword>
<keyword id="KW-0436">Ligase</keyword>
<keyword id="KW-0547">Nucleotide-binding</keyword>
<keyword id="KW-0648">Protein biosynthesis</keyword>
<reference key="1">
    <citation type="journal article" date="2006" name="Proc. Natl. Acad. Sci. U.S.A.">
        <title>Comparative genomics of the lactic acid bacteria.</title>
        <authorList>
            <person name="Makarova K.S."/>
            <person name="Slesarev A."/>
            <person name="Wolf Y.I."/>
            <person name="Sorokin A."/>
            <person name="Mirkin B."/>
            <person name="Koonin E.V."/>
            <person name="Pavlov A."/>
            <person name="Pavlova N."/>
            <person name="Karamychev V."/>
            <person name="Polouchine N."/>
            <person name="Shakhova V."/>
            <person name="Grigoriev I."/>
            <person name="Lou Y."/>
            <person name="Rohksar D."/>
            <person name="Lucas S."/>
            <person name="Huang K."/>
            <person name="Goodstein D.M."/>
            <person name="Hawkins T."/>
            <person name="Plengvidhya V."/>
            <person name="Welker D."/>
            <person name="Hughes J."/>
            <person name="Goh Y."/>
            <person name="Benson A."/>
            <person name="Baldwin K."/>
            <person name="Lee J.-H."/>
            <person name="Diaz-Muniz I."/>
            <person name="Dosti B."/>
            <person name="Smeianov V."/>
            <person name="Wechter W."/>
            <person name="Barabote R."/>
            <person name="Lorca G."/>
            <person name="Altermann E."/>
            <person name="Barrangou R."/>
            <person name="Ganesan B."/>
            <person name="Xie Y."/>
            <person name="Rawsthorne H."/>
            <person name="Tamir D."/>
            <person name="Parker C."/>
            <person name="Breidt F."/>
            <person name="Broadbent J.R."/>
            <person name="Hutkins R."/>
            <person name="O'Sullivan D."/>
            <person name="Steele J."/>
            <person name="Unlu G."/>
            <person name="Saier M.H. Jr."/>
            <person name="Klaenhammer T."/>
            <person name="Richardson P."/>
            <person name="Kozyavkin S."/>
            <person name="Weimer B.C."/>
            <person name="Mills D.A."/>
        </authorList>
    </citation>
    <scope>NUCLEOTIDE SEQUENCE [LARGE SCALE GENOMIC DNA]</scope>
    <source>
        <strain>ATCC 25745 / CCUG 21536 / LMG 10740 / 183-1w</strain>
    </source>
</reference>
<dbReference type="EC" id="6.1.1.11" evidence="1"/>
<dbReference type="EMBL" id="CP000422">
    <property type="protein sequence ID" value="ABJ68467.1"/>
    <property type="molecule type" value="Genomic_DNA"/>
</dbReference>
<dbReference type="RefSeq" id="WP_011673662.1">
    <property type="nucleotide sequence ID" value="NC_008525.1"/>
</dbReference>
<dbReference type="SMR" id="Q03EA5"/>
<dbReference type="STRING" id="278197.PEPE_1436"/>
<dbReference type="GeneID" id="33062501"/>
<dbReference type="KEGG" id="ppe:PEPE_1436"/>
<dbReference type="eggNOG" id="COG0172">
    <property type="taxonomic scope" value="Bacteria"/>
</dbReference>
<dbReference type="HOGENOM" id="CLU_023797_1_1_9"/>
<dbReference type="OrthoDB" id="9804647at2"/>
<dbReference type="UniPathway" id="UPA00906">
    <property type="reaction ID" value="UER00895"/>
</dbReference>
<dbReference type="Proteomes" id="UP000000773">
    <property type="component" value="Chromosome"/>
</dbReference>
<dbReference type="GO" id="GO:0005737">
    <property type="term" value="C:cytoplasm"/>
    <property type="evidence" value="ECO:0007669"/>
    <property type="project" value="UniProtKB-SubCell"/>
</dbReference>
<dbReference type="GO" id="GO:0005524">
    <property type="term" value="F:ATP binding"/>
    <property type="evidence" value="ECO:0007669"/>
    <property type="project" value="UniProtKB-UniRule"/>
</dbReference>
<dbReference type="GO" id="GO:0140096">
    <property type="term" value="F:catalytic activity, acting on a protein"/>
    <property type="evidence" value="ECO:0007669"/>
    <property type="project" value="UniProtKB-ARBA"/>
</dbReference>
<dbReference type="GO" id="GO:0004828">
    <property type="term" value="F:serine-tRNA ligase activity"/>
    <property type="evidence" value="ECO:0007669"/>
    <property type="project" value="UniProtKB-UniRule"/>
</dbReference>
<dbReference type="GO" id="GO:0016740">
    <property type="term" value="F:transferase activity"/>
    <property type="evidence" value="ECO:0007669"/>
    <property type="project" value="UniProtKB-ARBA"/>
</dbReference>
<dbReference type="GO" id="GO:0016260">
    <property type="term" value="P:selenocysteine biosynthetic process"/>
    <property type="evidence" value="ECO:0007669"/>
    <property type="project" value="UniProtKB-UniRule"/>
</dbReference>
<dbReference type="GO" id="GO:0006434">
    <property type="term" value="P:seryl-tRNA aminoacylation"/>
    <property type="evidence" value="ECO:0007669"/>
    <property type="project" value="UniProtKB-UniRule"/>
</dbReference>
<dbReference type="CDD" id="cd00770">
    <property type="entry name" value="SerRS_core"/>
    <property type="match status" value="1"/>
</dbReference>
<dbReference type="Gene3D" id="3.30.930.10">
    <property type="entry name" value="Bira Bifunctional Protein, Domain 2"/>
    <property type="match status" value="1"/>
</dbReference>
<dbReference type="Gene3D" id="1.10.287.40">
    <property type="entry name" value="Serine-tRNA synthetase, tRNA binding domain"/>
    <property type="match status" value="1"/>
</dbReference>
<dbReference type="HAMAP" id="MF_00176">
    <property type="entry name" value="Ser_tRNA_synth_type1"/>
    <property type="match status" value="1"/>
</dbReference>
<dbReference type="InterPro" id="IPR002314">
    <property type="entry name" value="aa-tRNA-synt_IIb"/>
</dbReference>
<dbReference type="InterPro" id="IPR006195">
    <property type="entry name" value="aa-tRNA-synth_II"/>
</dbReference>
<dbReference type="InterPro" id="IPR045864">
    <property type="entry name" value="aa-tRNA-synth_II/BPL/LPL"/>
</dbReference>
<dbReference type="InterPro" id="IPR002317">
    <property type="entry name" value="Ser-tRNA-ligase_type_1"/>
</dbReference>
<dbReference type="InterPro" id="IPR015866">
    <property type="entry name" value="Ser-tRNA-synth_1_N"/>
</dbReference>
<dbReference type="InterPro" id="IPR042103">
    <property type="entry name" value="SerRS_1_N_sf"/>
</dbReference>
<dbReference type="InterPro" id="IPR033729">
    <property type="entry name" value="SerRS_core"/>
</dbReference>
<dbReference type="InterPro" id="IPR010978">
    <property type="entry name" value="tRNA-bd_arm"/>
</dbReference>
<dbReference type="NCBIfam" id="TIGR00414">
    <property type="entry name" value="serS"/>
    <property type="match status" value="1"/>
</dbReference>
<dbReference type="PANTHER" id="PTHR43697:SF1">
    <property type="entry name" value="SERINE--TRNA LIGASE"/>
    <property type="match status" value="1"/>
</dbReference>
<dbReference type="PANTHER" id="PTHR43697">
    <property type="entry name" value="SERYL-TRNA SYNTHETASE"/>
    <property type="match status" value="1"/>
</dbReference>
<dbReference type="Pfam" id="PF02403">
    <property type="entry name" value="Seryl_tRNA_N"/>
    <property type="match status" value="1"/>
</dbReference>
<dbReference type="Pfam" id="PF00587">
    <property type="entry name" value="tRNA-synt_2b"/>
    <property type="match status" value="1"/>
</dbReference>
<dbReference type="PIRSF" id="PIRSF001529">
    <property type="entry name" value="Ser-tRNA-synth_IIa"/>
    <property type="match status" value="1"/>
</dbReference>
<dbReference type="PRINTS" id="PR00981">
    <property type="entry name" value="TRNASYNTHSER"/>
</dbReference>
<dbReference type="SUPFAM" id="SSF55681">
    <property type="entry name" value="Class II aaRS and biotin synthetases"/>
    <property type="match status" value="1"/>
</dbReference>
<dbReference type="SUPFAM" id="SSF46589">
    <property type="entry name" value="tRNA-binding arm"/>
    <property type="match status" value="1"/>
</dbReference>
<dbReference type="PROSITE" id="PS50862">
    <property type="entry name" value="AA_TRNA_LIGASE_II"/>
    <property type="match status" value="1"/>
</dbReference>
<name>SYS_PEDPA</name>
<evidence type="ECO:0000255" key="1">
    <source>
        <dbReference type="HAMAP-Rule" id="MF_00176"/>
    </source>
</evidence>
<accession>Q03EA5</accession>
<feature type="chain" id="PRO_1000019757" description="Serine--tRNA ligase">
    <location>
        <begin position="1"/>
        <end position="426"/>
    </location>
</feature>
<feature type="binding site" evidence="1">
    <location>
        <begin position="232"/>
        <end position="234"/>
    </location>
    <ligand>
        <name>L-serine</name>
        <dbReference type="ChEBI" id="CHEBI:33384"/>
    </ligand>
</feature>
<feature type="binding site" evidence="1">
    <location>
        <begin position="263"/>
        <end position="265"/>
    </location>
    <ligand>
        <name>ATP</name>
        <dbReference type="ChEBI" id="CHEBI:30616"/>
    </ligand>
</feature>
<feature type="binding site" evidence="1">
    <location>
        <position position="286"/>
    </location>
    <ligand>
        <name>L-serine</name>
        <dbReference type="ChEBI" id="CHEBI:33384"/>
    </ligand>
</feature>
<feature type="binding site" evidence="1">
    <location>
        <begin position="350"/>
        <end position="353"/>
    </location>
    <ligand>
        <name>ATP</name>
        <dbReference type="ChEBI" id="CHEBI:30616"/>
    </ligand>
</feature>
<feature type="binding site" evidence="1">
    <location>
        <position position="385"/>
    </location>
    <ligand>
        <name>L-serine</name>
        <dbReference type="ChEBI" id="CHEBI:33384"/>
    </ligand>
</feature>
<protein>
    <recommendedName>
        <fullName evidence="1">Serine--tRNA ligase</fullName>
        <ecNumber evidence="1">6.1.1.11</ecNumber>
    </recommendedName>
    <alternativeName>
        <fullName evidence="1">Seryl-tRNA synthetase</fullName>
        <shortName evidence="1">SerRS</shortName>
    </alternativeName>
    <alternativeName>
        <fullName evidence="1">Seryl-tRNA(Ser/Sec) synthetase</fullName>
    </alternativeName>
</protein>